<keyword id="KW-0012">Acyltransferase</keyword>
<keyword id="KW-0963">Cytoplasm</keyword>
<keyword id="KW-0276">Fatty acid metabolism</keyword>
<keyword id="KW-0442">Lipid degradation</keyword>
<keyword id="KW-0443">Lipid metabolism</keyword>
<keyword id="KW-0808">Transferase</keyword>
<evidence type="ECO:0000255" key="1">
    <source>
        <dbReference type="HAMAP-Rule" id="MF_01618"/>
    </source>
</evidence>
<name>FADI_SHEHH</name>
<dbReference type="EC" id="2.3.1.16" evidence="1"/>
<dbReference type="EMBL" id="CP000931">
    <property type="protein sequence ID" value="ABZ77224.1"/>
    <property type="molecule type" value="Genomic_DNA"/>
</dbReference>
<dbReference type="RefSeq" id="WP_012277752.1">
    <property type="nucleotide sequence ID" value="NC_010334.1"/>
</dbReference>
<dbReference type="SMR" id="B0TL22"/>
<dbReference type="STRING" id="458817.Shal_2671"/>
<dbReference type="KEGG" id="shl:Shal_2671"/>
<dbReference type="eggNOG" id="COG0183">
    <property type="taxonomic scope" value="Bacteria"/>
</dbReference>
<dbReference type="HOGENOM" id="CLU_031026_2_0_6"/>
<dbReference type="OrthoDB" id="1402717at2"/>
<dbReference type="UniPathway" id="UPA00659"/>
<dbReference type="Proteomes" id="UP000001317">
    <property type="component" value="Chromosome"/>
</dbReference>
<dbReference type="GO" id="GO:0005829">
    <property type="term" value="C:cytosol"/>
    <property type="evidence" value="ECO:0007669"/>
    <property type="project" value="TreeGrafter"/>
</dbReference>
<dbReference type="GO" id="GO:0003988">
    <property type="term" value="F:acetyl-CoA C-acyltransferase activity"/>
    <property type="evidence" value="ECO:0007669"/>
    <property type="project" value="UniProtKB-UniRule"/>
</dbReference>
<dbReference type="GO" id="GO:0006635">
    <property type="term" value="P:fatty acid beta-oxidation"/>
    <property type="evidence" value="ECO:0007669"/>
    <property type="project" value="UniProtKB-UniRule"/>
</dbReference>
<dbReference type="CDD" id="cd00751">
    <property type="entry name" value="thiolase"/>
    <property type="match status" value="1"/>
</dbReference>
<dbReference type="FunFam" id="3.40.47.10:FF:000011">
    <property type="entry name" value="3-ketoacyl-CoA thiolase"/>
    <property type="match status" value="1"/>
</dbReference>
<dbReference type="Gene3D" id="3.40.47.10">
    <property type="match status" value="1"/>
</dbReference>
<dbReference type="HAMAP" id="MF_01618">
    <property type="entry name" value="FadI"/>
    <property type="match status" value="1"/>
</dbReference>
<dbReference type="InterPro" id="IPR012806">
    <property type="entry name" value="Ac-CoA_C-AcTrfase_FadI"/>
</dbReference>
<dbReference type="InterPro" id="IPR002155">
    <property type="entry name" value="Thiolase"/>
</dbReference>
<dbReference type="InterPro" id="IPR016039">
    <property type="entry name" value="Thiolase-like"/>
</dbReference>
<dbReference type="InterPro" id="IPR020610">
    <property type="entry name" value="Thiolase_AS"/>
</dbReference>
<dbReference type="InterPro" id="IPR020617">
    <property type="entry name" value="Thiolase_C"/>
</dbReference>
<dbReference type="InterPro" id="IPR020613">
    <property type="entry name" value="Thiolase_CS"/>
</dbReference>
<dbReference type="InterPro" id="IPR020616">
    <property type="entry name" value="Thiolase_N"/>
</dbReference>
<dbReference type="NCBIfam" id="TIGR01930">
    <property type="entry name" value="AcCoA-C-Actrans"/>
    <property type="match status" value="1"/>
</dbReference>
<dbReference type="NCBIfam" id="TIGR02446">
    <property type="entry name" value="FadI"/>
    <property type="match status" value="1"/>
</dbReference>
<dbReference type="NCBIfam" id="NF006516">
    <property type="entry name" value="PRK08963.1"/>
    <property type="match status" value="1"/>
</dbReference>
<dbReference type="PANTHER" id="PTHR18919:SF107">
    <property type="entry name" value="ACETYL-COA ACETYLTRANSFERASE, CYTOSOLIC"/>
    <property type="match status" value="1"/>
</dbReference>
<dbReference type="PANTHER" id="PTHR18919">
    <property type="entry name" value="ACETYL-COA C-ACYLTRANSFERASE"/>
    <property type="match status" value="1"/>
</dbReference>
<dbReference type="Pfam" id="PF02803">
    <property type="entry name" value="Thiolase_C"/>
    <property type="match status" value="1"/>
</dbReference>
<dbReference type="Pfam" id="PF00108">
    <property type="entry name" value="Thiolase_N"/>
    <property type="match status" value="1"/>
</dbReference>
<dbReference type="PIRSF" id="PIRSF000429">
    <property type="entry name" value="Ac-CoA_Ac_transf"/>
    <property type="match status" value="1"/>
</dbReference>
<dbReference type="SUPFAM" id="SSF53901">
    <property type="entry name" value="Thiolase-like"/>
    <property type="match status" value="2"/>
</dbReference>
<dbReference type="PROSITE" id="PS00737">
    <property type="entry name" value="THIOLASE_2"/>
    <property type="match status" value="1"/>
</dbReference>
<dbReference type="PROSITE" id="PS00099">
    <property type="entry name" value="THIOLASE_3"/>
    <property type="match status" value="1"/>
</dbReference>
<reference key="1">
    <citation type="submission" date="2008-01" db="EMBL/GenBank/DDBJ databases">
        <title>Complete sequence of Shewanella halifaxensis HAW-EB4.</title>
        <authorList>
            <consortium name="US DOE Joint Genome Institute"/>
            <person name="Copeland A."/>
            <person name="Lucas S."/>
            <person name="Lapidus A."/>
            <person name="Glavina del Rio T."/>
            <person name="Dalin E."/>
            <person name="Tice H."/>
            <person name="Bruce D."/>
            <person name="Goodwin L."/>
            <person name="Pitluck S."/>
            <person name="Sims D."/>
            <person name="Brettin T."/>
            <person name="Detter J.C."/>
            <person name="Han C."/>
            <person name="Kuske C.R."/>
            <person name="Schmutz J."/>
            <person name="Larimer F."/>
            <person name="Land M."/>
            <person name="Hauser L."/>
            <person name="Kyrpides N."/>
            <person name="Kim E."/>
            <person name="Zhao J.-S."/>
            <person name="Richardson P."/>
        </authorList>
    </citation>
    <scope>NUCLEOTIDE SEQUENCE [LARGE SCALE GENOMIC DNA]</scope>
    <source>
        <strain>HAW-EB4</strain>
    </source>
</reference>
<proteinExistence type="inferred from homology"/>
<sequence length="436" mass="46592">MSDRQQVTNARGERIAIVSGLRTPFAKQATAFHGVSALDMGKMVVNELLSRSELNPKEIEQLVYGQVVQMPAAPNIAREIVLGTGMDVSTDAYSVTRACATSFQSTVNVAESIMTGNMDIGIAGGADSSSVLPIGVSKKLAHALVDLNKARSFGQKLAIFRRLGLKDLLPVPPAVAEYSTGLSMGQTAEQMAKTYNISRADQDALAHRSHTLATETWNAGKLAEEVMAAHVPPYKSFIDRDNNIRENSTLESYAKLRPAFDRKHGSVTAANSTPLTDGASAVLLMSEGRAKALGYTPIGYIKSYAFTAIDVWQDMLMGPSYATPLALKRAGMELEDLTLIEMHEAFAAQTLANMQMFASKKFAEEKLGRNRAIGEIDMSKFNVLGGSLAYGHPFAATGTRLVTQVCHELKRRGGGTGLATACAAGGLGAAMIVEVE</sequence>
<feature type="chain" id="PRO_1000088068" description="3-ketoacyl-CoA thiolase">
    <location>
        <begin position="1"/>
        <end position="436"/>
    </location>
</feature>
<feature type="active site" description="Acyl-thioester intermediate" evidence="1">
    <location>
        <position position="99"/>
    </location>
</feature>
<feature type="active site" description="Proton acceptor" evidence="1">
    <location>
        <position position="392"/>
    </location>
</feature>
<feature type="active site" description="Proton acceptor" evidence="1">
    <location>
        <position position="422"/>
    </location>
</feature>
<organism>
    <name type="scientific">Shewanella halifaxensis (strain HAW-EB4)</name>
    <dbReference type="NCBI Taxonomy" id="458817"/>
    <lineage>
        <taxon>Bacteria</taxon>
        <taxon>Pseudomonadati</taxon>
        <taxon>Pseudomonadota</taxon>
        <taxon>Gammaproteobacteria</taxon>
        <taxon>Alteromonadales</taxon>
        <taxon>Shewanellaceae</taxon>
        <taxon>Shewanella</taxon>
    </lineage>
</organism>
<comment type="function">
    <text evidence="1">Catalyzes the final step of fatty acid oxidation in which acetyl-CoA is released and the CoA ester of a fatty acid two carbons shorter is formed.</text>
</comment>
<comment type="catalytic activity">
    <reaction evidence="1">
        <text>an acyl-CoA + acetyl-CoA = a 3-oxoacyl-CoA + CoA</text>
        <dbReference type="Rhea" id="RHEA:21564"/>
        <dbReference type="ChEBI" id="CHEBI:57287"/>
        <dbReference type="ChEBI" id="CHEBI:57288"/>
        <dbReference type="ChEBI" id="CHEBI:58342"/>
        <dbReference type="ChEBI" id="CHEBI:90726"/>
        <dbReference type="EC" id="2.3.1.16"/>
    </reaction>
</comment>
<comment type="pathway">
    <text evidence="1">Lipid metabolism; fatty acid beta-oxidation.</text>
</comment>
<comment type="subunit">
    <text evidence="1">Heterotetramer of two alpha chains (FadJ) and two beta chains (FadI).</text>
</comment>
<comment type="subcellular location">
    <subcellularLocation>
        <location evidence="1">Cytoplasm</location>
    </subcellularLocation>
</comment>
<comment type="similarity">
    <text evidence="1">Belongs to the thiolase-like superfamily. Thiolase family.</text>
</comment>
<gene>
    <name evidence="1" type="primary">fadI</name>
    <name type="ordered locus">Shal_2671</name>
</gene>
<accession>B0TL22</accession>
<protein>
    <recommendedName>
        <fullName evidence="1">3-ketoacyl-CoA thiolase</fullName>
        <ecNumber evidence="1">2.3.1.16</ecNumber>
    </recommendedName>
    <alternativeName>
        <fullName evidence="1">ACSs</fullName>
    </alternativeName>
    <alternativeName>
        <fullName evidence="1">Acetyl-CoA acyltransferase</fullName>
    </alternativeName>
    <alternativeName>
        <fullName evidence="1">Acyl-CoA ligase</fullName>
    </alternativeName>
    <alternativeName>
        <fullName evidence="1">Beta-ketothiolase</fullName>
    </alternativeName>
    <alternativeName>
        <fullName evidence="1">Fatty acid oxidation complex subunit beta</fullName>
    </alternativeName>
</protein>